<feature type="chain" id="PRO_0000236471" description="Large ribosomal subunit protein bL9">
    <location>
        <begin position="1"/>
        <end position="205"/>
    </location>
</feature>
<feature type="region of interest" description="Disordered" evidence="2">
    <location>
        <begin position="160"/>
        <end position="205"/>
    </location>
</feature>
<feature type="compositionally biased region" description="Low complexity" evidence="2">
    <location>
        <begin position="184"/>
        <end position="195"/>
    </location>
</feature>
<keyword id="KW-0687">Ribonucleoprotein</keyword>
<keyword id="KW-0689">Ribosomal protein</keyword>
<keyword id="KW-0694">RNA-binding</keyword>
<keyword id="KW-0699">rRNA-binding</keyword>
<organism>
    <name type="scientific">Anaplasma phagocytophilum (strain HZ)</name>
    <dbReference type="NCBI Taxonomy" id="212042"/>
    <lineage>
        <taxon>Bacteria</taxon>
        <taxon>Pseudomonadati</taxon>
        <taxon>Pseudomonadota</taxon>
        <taxon>Alphaproteobacteria</taxon>
        <taxon>Rickettsiales</taxon>
        <taxon>Anaplasmataceae</taxon>
        <taxon>Anaplasma</taxon>
        <taxon>phagocytophilum group</taxon>
    </lineage>
</organism>
<proteinExistence type="inferred from homology"/>
<reference key="1">
    <citation type="journal article" date="2006" name="PLoS Genet.">
        <title>Comparative genomics of emerging human ehrlichiosis agents.</title>
        <authorList>
            <person name="Dunning Hotopp J.C."/>
            <person name="Lin M."/>
            <person name="Madupu R."/>
            <person name="Crabtree J."/>
            <person name="Angiuoli S.V."/>
            <person name="Eisen J.A."/>
            <person name="Seshadri R."/>
            <person name="Ren Q."/>
            <person name="Wu M."/>
            <person name="Utterback T.R."/>
            <person name="Smith S."/>
            <person name="Lewis M."/>
            <person name="Khouri H."/>
            <person name="Zhang C."/>
            <person name="Niu H."/>
            <person name="Lin Q."/>
            <person name="Ohashi N."/>
            <person name="Zhi N."/>
            <person name="Nelson W.C."/>
            <person name="Brinkac L.M."/>
            <person name="Dodson R.J."/>
            <person name="Rosovitz M.J."/>
            <person name="Sundaram J.P."/>
            <person name="Daugherty S.C."/>
            <person name="Davidsen T."/>
            <person name="Durkin A.S."/>
            <person name="Gwinn M.L."/>
            <person name="Haft D.H."/>
            <person name="Selengut J.D."/>
            <person name="Sullivan S.A."/>
            <person name="Zafar N."/>
            <person name="Zhou L."/>
            <person name="Benahmed F."/>
            <person name="Forberger H."/>
            <person name="Halpin R."/>
            <person name="Mulligan S."/>
            <person name="Robinson J."/>
            <person name="White O."/>
            <person name="Rikihisa Y."/>
            <person name="Tettelin H."/>
        </authorList>
    </citation>
    <scope>NUCLEOTIDE SEQUENCE [LARGE SCALE GENOMIC DNA]</scope>
    <source>
        <strain>HZ</strain>
    </source>
</reference>
<comment type="function">
    <text evidence="1">Binds to the 23S rRNA.</text>
</comment>
<comment type="similarity">
    <text evidence="1">Belongs to the bacterial ribosomal protein bL9 family.</text>
</comment>
<evidence type="ECO:0000255" key="1">
    <source>
        <dbReference type="HAMAP-Rule" id="MF_00503"/>
    </source>
</evidence>
<evidence type="ECO:0000256" key="2">
    <source>
        <dbReference type="SAM" id="MobiDB-lite"/>
    </source>
</evidence>
<evidence type="ECO:0000305" key="3"/>
<accession>Q2GLH4</accession>
<name>RL9_ANAPZ</name>
<protein>
    <recommendedName>
        <fullName evidence="1">Large ribosomal subunit protein bL9</fullName>
    </recommendedName>
    <alternativeName>
        <fullName evidence="3">50S ribosomal protein L9</fullName>
    </alternativeName>
</protein>
<sequence length="205" mass="22026">MLSVILKSSIRGLGKAGEVAKVRPGYARYLLADGKAMRATKRNMELLAEKLAVMEEESNQKLREAEKVAEALAGECFVMIRQASDDGKLFGSVAVRDVAKLLGSLGYNVQPKEVFFSEVIKRIGEYEINVELHADLVAVVKLYVVRNEAEAERTRLQVARDRKSRNAAAASEVQDAPVEDGGDEVVSVDSVAAEDGGADASGGTA</sequence>
<gene>
    <name evidence="1" type="primary">rplI</name>
    <name type="ordered locus">APH_0153</name>
</gene>
<dbReference type="EMBL" id="CP000235">
    <property type="protein sequence ID" value="ABD43439.1"/>
    <property type="molecule type" value="Genomic_DNA"/>
</dbReference>
<dbReference type="RefSeq" id="WP_011450303.1">
    <property type="nucleotide sequence ID" value="NC_007797.1"/>
</dbReference>
<dbReference type="SMR" id="Q2GLH4"/>
<dbReference type="STRING" id="212042.APH_0153"/>
<dbReference type="PaxDb" id="212042-APH_0153"/>
<dbReference type="EnsemblBacteria" id="ABD43439">
    <property type="protein sequence ID" value="ABD43439"/>
    <property type="gene ID" value="APH_0153"/>
</dbReference>
<dbReference type="GeneID" id="92747615"/>
<dbReference type="KEGG" id="aph:APH_0153"/>
<dbReference type="eggNOG" id="COG0359">
    <property type="taxonomic scope" value="Bacteria"/>
</dbReference>
<dbReference type="HOGENOM" id="CLU_078938_1_1_5"/>
<dbReference type="Proteomes" id="UP000001943">
    <property type="component" value="Chromosome"/>
</dbReference>
<dbReference type="GO" id="GO:1990904">
    <property type="term" value="C:ribonucleoprotein complex"/>
    <property type="evidence" value="ECO:0007669"/>
    <property type="project" value="UniProtKB-KW"/>
</dbReference>
<dbReference type="GO" id="GO:0005840">
    <property type="term" value="C:ribosome"/>
    <property type="evidence" value="ECO:0007669"/>
    <property type="project" value="UniProtKB-KW"/>
</dbReference>
<dbReference type="GO" id="GO:0019843">
    <property type="term" value="F:rRNA binding"/>
    <property type="evidence" value="ECO:0007669"/>
    <property type="project" value="UniProtKB-UniRule"/>
</dbReference>
<dbReference type="GO" id="GO:0003735">
    <property type="term" value="F:structural constituent of ribosome"/>
    <property type="evidence" value="ECO:0007669"/>
    <property type="project" value="InterPro"/>
</dbReference>
<dbReference type="GO" id="GO:0006412">
    <property type="term" value="P:translation"/>
    <property type="evidence" value="ECO:0007669"/>
    <property type="project" value="UniProtKB-UniRule"/>
</dbReference>
<dbReference type="Gene3D" id="3.10.430.100">
    <property type="entry name" value="Ribosomal protein L9, C-terminal domain"/>
    <property type="match status" value="1"/>
</dbReference>
<dbReference type="Gene3D" id="3.40.5.10">
    <property type="entry name" value="Ribosomal protein L9, N-terminal domain"/>
    <property type="match status" value="1"/>
</dbReference>
<dbReference type="HAMAP" id="MF_00503">
    <property type="entry name" value="Ribosomal_bL9"/>
    <property type="match status" value="1"/>
</dbReference>
<dbReference type="InterPro" id="IPR000244">
    <property type="entry name" value="Ribosomal_bL9"/>
</dbReference>
<dbReference type="InterPro" id="IPR009027">
    <property type="entry name" value="Ribosomal_bL9/RNase_H1_N"/>
</dbReference>
<dbReference type="InterPro" id="IPR020594">
    <property type="entry name" value="Ribosomal_bL9_bac/chp"/>
</dbReference>
<dbReference type="InterPro" id="IPR020069">
    <property type="entry name" value="Ribosomal_bL9_C"/>
</dbReference>
<dbReference type="InterPro" id="IPR036791">
    <property type="entry name" value="Ribosomal_bL9_C_sf"/>
</dbReference>
<dbReference type="InterPro" id="IPR020070">
    <property type="entry name" value="Ribosomal_bL9_N"/>
</dbReference>
<dbReference type="InterPro" id="IPR036935">
    <property type="entry name" value="Ribosomal_bL9_N_sf"/>
</dbReference>
<dbReference type="NCBIfam" id="TIGR00158">
    <property type="entry name" value="L9"/>
    <property type="match status" value="1"/>
</dbReference>
<dbReference type="PANTHER" id="PTHR21368">
    <property type="entry name" value="50S RIBOSOMAL PROTEIN L9"/>
    <property type="match status" value="1"/>
</dbReference>
<dbReference type="Pfam" id="PF03948">
    <property type="entry name" value="Ribosomal_L9_C"/>
    <property type="match status" value="1"/>
</dbReference>
<dbReference type="Pfam" id="PF01281">
    <property type="entry name" value="Ribosomal_L9_N"/>
    <property type="match status" value="1"/>
</dbReference>
<dbReference type="SUPFAM" id="SSF55658">
    <property type="entry name" value="L9 N-domain-like"/>
    <property type="match status" value="1"/>
</dbReference>
<dbReference type="SUPFAM" id="SSF55653">
    <property type="entry name" value="Ribosomal protein L9 C-domain"/>
    <property type="match status" value="1"/>
</dbReference>